<accession>P13360</accession>
<accession>Q95T58</accession>
<accession>Q9VE83</accession>
<accession>Q9VE84</accession>
<protein>
    <recommendedName>
        <fullName>Protein glass</fullName>
    </recommendedName>
</protein>
<evidence type="ECO:0000255" key="1">
    <source>
        <dbReference type="PROSITE-ProRule" id="PRU00042"/>
    </source>
</evidence>
<evidence type="ECO:0000256" key="2">
    <source>
        <dbReference type="SAM" id="MobiDB-lite"/>
    </source>
</evidence>
<evidence type="ECO:0000269" key="3">
    <source>
    </source>
</evidence>
<evidence type="ECO:0000303" key="4">
    <source>
    </source>
</evidence>
<evidence type="ECO:0000305" key="5"/>
<keyword id="KW-0025">Alternative splicing</keyword>
<keyword id="KW-0238">DNA-binding</keyword>
<keyword id="KW-0479">Metal-binding</keyword>
<keyword id="KW-0539">Nucleus</keyword>
<keyword id="KW-1185">Reference proteome</keyword>
<keyword id="KW-0677">Repeat</keyword>
<keyword id="KW-0716">Sensory transduction</keyword>
<keyword id="KW-0804">Transcription</keyword>
<keyword id="KW-0805">Transcription regulation</keyword>
<keyword id="KW-0844">Vision</keyword>
<keyword id="KW-0862">Zinc</keyword>
<keyword id="KW-0863">Zinc-finger</keyword>
<comment type="function">
    <text evidence="3">Transcription factor required for gene expression specific to photoreceptor cells.</text>
</comment>
<comment type="subcellular location">
    <subcellularLocation>
        <location evidence="5">Nucleus</location>
    </subcellularLocation>
</comment>
<comment type="alternative products">
    <event type="alternative splicing"/>
    <isoform>
        <id>P13360-1</id>
        <name>A</name>
        <sequence type="displayed"/>
    </isoform>
    <isoform>
        <id>P13360-2</id>
        <name>B</name>
        <sequence type="described" ref="VSP_009352"/>
    </isoform>
</comment>
<dbReference type="EMBL" id="X15400">
    <property type="protein sequence ID" value="CAA33450.1"/>
    <property type="molecule type" value="Genomic_DNA"/>
</dbReference>
<dbReference type="EMBL" id="AE014297">
    <property type="protein sequence ID" value="AAF55543.1"/>
    <property type="molecule type" value="Genomic_DNA"/>
</dbReference>
<dbReference type="EMBL" id="AE014297">
    <property type="protein sequence ID" value="AAF55544.2"/>
    <property type="molecule type" value="Genomic_DNA"/>
</dbReference>
<dbReference type="EMBL" id="AY060322">
    <property type="protein sequence ID" value="AAL25361.1"/>
    <property type="molecule type" value="mRNA"/>
</dbReference>
<dbReference type="PIR" id="S05447">
    <property type="entry name" value="S05447"/>
</dbReference>
<dbReference type="RefSeq" id="NP_476854.1">
    <molecule id="P13360-1"/>
    <property type="nucleotide sequence ID" value="NM_057506.3"/>
</dbReference>
<dbReference type="RefSeq" id="NP_732330.1">
    <molecule id="P13360-2"/>
    <property type="nucleotide sequence ID" value="NM_169807.4"/>
</dbReference>
<dbReference type="SMR" id="P13360"/>
<dbReference type="BioGRID" id="67226">
    <property type="interactions" value="23"/>
</dbReference>
<dbReference type="FunCoup" id="P13360">
    <property type="interactions" value="87"/>
</dbReference>
<dbReference type="IntAct" id="P13360">
    <property type="interactions" value="4"/>
</dbReference>
<dbReference type="STRING" id="7227.FBpp0303075"/>
<dbReference type="PaxDb" id="7227-FBpp0083005"/>
<dbReference type="EnsemblMetazoa" id="FBtr0083584">
    <molecule id="P13360-1"/>
    <property type="protein sequence ID" value="FBpp0083005"/>
    <property type="gene ID" value="FBgn0004618"/>
</dbReference>
<dbReference type="EnsemblMetazoa" id="FBtr0083585">
    <molecule id="P13360-2"/>
    <property type="protein sequence ID" value="FBpp0083006"/>
    <property type="gene ID" value="FBgn0004618"/>
</dbReference>
<dbReference type="GeneID" id="42210"/>
<dbReference type="KEGG" id="dme:Dmel_CG7672"/>
<dbReference type="AGR" id="FB:FBgn0004618"/>
<dbReference type="CTD" id="42210"/>
<dbReference type="FlyBase" id="FBgn0004618">
    <property type="gene designation" value="gl"/>
</dbReference>
<dbReference type="VEuPathDB" id="VectorBase:FBgn0004618"/>
<dbReference type="eggNOG" id="KOG1721">
    <property type="taxonomic scope" value="Eukaryota"/>
</dbReference>
<dbReference type="InParanoid" id="P13360"/>
<dbReference type="OMA" id="DMKPNLC"/>
<dbReference type="OrthoDB" id="8113227at2759"/>
<dbReference type="PhylomeDB" id="P13360"/>
<dbReference type="Reactome" id="R-DME-212436">
    <property type="pathway name" value="Generic Transcription Pathway"/>
</dbReference>
<dbReference type="SignaLink" id="P13360"/>
<dbReference type="BioGRID-ORCS" id="42210">
    <property type="hits" value="0 hits in 3 CRISPR screens"/>
</dbReference>
<dbReference type="GenomeRNAi" id="42210"/>
<dbReference type="PRO" id="PR:P13360"/>
<dbReference type="Proteomes" id="UP000000803">
    <property type="component" value="Chromosome 3R"/>
</dbReference>
<dbReference type="Bgee" id="FBgn0004618">
    <property type="expression patterns" value="Expressed in photoreceptor cell R7 (Drosophila) in insect head and 34 other cell types or tissues"/>
</dbReference>
<dbReference type="ExpressionAtlas" id="P13360">
    <property type="expression patterns" value="baseline and differential"/>
</dbReference>
<dbReference type="GO" id="GO:0005634">
    <property type="term" value="C:nucleus"/>
    <property type="evidence" value="ECO:0000314"/>
    <property type="project" value="UniProtKB"/>
</dbReference>
<dbReference type="GO" id="GO:0003677">
    <property type="term" value="F:DNA binding"/>
    <property type="evidence" value="ECO:0000315"/>
    <property type="project" value="UniProtKB"/>
</dbReference>
<dbReference type="GO" id="GO:0000981">
    <property type="term" value="F:DNA-binding transcription factor activity, RNA polymerase II-specific"/>
    <property type="evidence" value="ECO:0000314"/>
    <property type="project" value="FlyBase"/>
</dbReference>
<dbReference type="GO" id="GO:0000978">
    <property type="term" value="F:RNA polymerase II cis-regulatory region sequence-specific DNA binding"/>
    <property type="evidence" value="ECO:0000318"/>
    <property type="project" value="GO_Central"/>
</dbReference>
<dbReference type="GO" id="GO:0008270">
    <property type="term" value="F:zinc ion binding"/>
    <property type="evidence" value="ECO:0007669"/>
    <property type="project" value="UniProtKB-KW"/>
</dbReference>
<dbReference type="GO" id="GO:0060086">
    <property type="term" value="P:circadian temperature homeostasis"/>
    <property type="evidence" value="ECO:0000315"/>
    <property type="project" value="FlyBase"/>
</dbReference>
<dbReference type="GO" id="GO:0001745">
    <property type="term" value="P:compound eye morphogenesis"/>
    <property type="evidence" value="ECO:0000315"/>
    <property type="project" value="FlyBase"/>
</dbReference>
<dbReference type="GO" id="GO:0001751">
    <property type="term" value="P:compound eye photoreceptor cell differentiation"/>
    <property type="evidence" value="ECO:0000315"/>
    <property type="project" value="FlyBase"/>
</dbReference>
<dbReference type="GO" id="GO:0001752">
    <property type="term" value="P:compound eye photoreceptor fate commitment"/>
    <property type="evidence" value="ECO:0000315"/>
    <property type="project" value="FlyBase"/>
</dbReference>
<dbReference type="GO" id="GO:0009649">
    <property type="term" value="P:entrainment of circadian clock"/>
    <property type="evidence" value="ECO:0000315"/>
    <property type="project" value="FlyBase"/>
</dbReference>
<dbReference type="GO" id="GO:0043153">
    <property type="term" value="P:entrainment of circadian clock by photoperiod"/>
    <property type="evidence" value="ECO:0000315"/>
    <property type="project" value="FlyBase"/>
</dbReference>
<dbReference type="GO" id="GO:0046530">
    <property type="term" value="P:photoreceptor cell differentiation"/>
    <property type="evidence" value="ECO:0000315"/>
    <property type="project" value="FlyBase"/>
</dbReference>
<dbReference type="GO" id="GO:0045944">
    <property type="term" value="P:positive regulation of transcription by RNA polymerase II"/>
    <property type="evidence" value="ECO:0000315"/>
    <property type="project" value="FlyBase"/>
</dbReference>
<dbReference type="GO" id="GO:0048052">
    <property type="term" value="P:R1/R6 cell differentiation"/>
    <property type="evidence" value="ECO:0000315"/>
    <property type="project" value="FlyBase"/>
</dbReference>
<dbReference type="GO" id="GO:0045466">
    <property type="term" value="P:R7 cell differentiation"/>
    <property type="evidence" value="ECO:0000315"/>
    <property type="project" value="FlyBase"/>
</dbReference>
<dbReference type="GO" id="GO:0006355">
    <property type="term" value="P:regulation of DNA-templated transcription"/>
    <property type="evidence" value="ECO:0000315"/>
    <property type="project" value="UniProtKB"/>
</dbReference>
<dbReference type="GO" id="GO:0006357">
    <property type="term" value="P:regulation of transcription by RNA polymerase II"/>
    <property type="evidence" value="ECO:0000318"/>
    <property type="project" value="GO_Central"/>
</dbReference>
<dbReference type="GO" id="GO:0010114">
    <property type="term" value="P:response to red light"/>
    <property type="evidence" value="ECO:0000315"/>
    <property type="project" value="FlyBase"/>
</dbReference>
<dbReference type="GO" id="GO:0035271">
    <property type="term" value="P:ring gland development"/>
    <property type="evidence" value="ECO:0000315"/>
    <property type="project" value="FlyBase"/>
</dbReference>
<dbReference type="GO" id="GO:0007605">
    <property type="term" value="P:sensory perception of sound"/>
    <property type="evidence" value="ECO:0000315"/>
    <property type="project" value="FlyBase"/>
</dbReference>
<dbReference type="GO" id="GO:0007601">
    <property type="term" value="P:visual perception"/>
    <property type="evidence" value="ECO:0007669"/>
    <property type="project" value="UniProtKB-KW"/>
</dbReference>
<dbReference type="FunFam" id="3.30.160.60:FF:002423">
    <property type="entry name" value="Blast:Protein glass"/>
    <property type="match status" value="1"/>
</dbReference>
<dbReference type="FunFam" id="3.30.160.60:FF:000310">
    <property type="entry name" value="GLIS family zinc finger 2"/>
    <property type="match status" value="1"/>
</dbReference>
<dbReference type="FunFam" id="3.30.160.60:FF:001159">
    <property type="entry name" value="Protein glass"/>
    <property type="match status" value="1"/>
</dbReference>
<dbReference type="FunFam" id="3.30.160.60:FF:000875">
    <property type="entry name" value="zinc finger protein 236 isoform X7"/>
    <property type="match status" value="1"/>
</dbReference>
<dbReference type="FunFam" id="3.30.160.60:FF:002343">
    <property type="entry name" value="Zinc finger protein 33A"/>
    <property type="match status" value="1"/>
</dbReference>
<dbReference type="Gene3D" id="3.30.160.60">
    <property type="entry name" value="Classic Zinc Finger"/>
    <property type="match status" value="5"/>
</dbReference>
<dbReference type="InterPro" id="IPR050331">
    <property type="entry name" value="Zinc_finger"/>
</dbReference>
<dbReference type="InterPro" id="IPR036236">
    <property type="entry name" value="Znf_C2H2_sf"/>
</dbReference>
<dbReference type="InterPro" id="IPR013087">
    <property type="entry name" value="Znf_C2H2_type"/>
</dbReference>
<dbReference type="PANTHER" id="PTHR16515:SF49">
    <property type="entry name" value="GASTRULA ZINC FINGER PROTEIN XLCGF49.1-LIKE-RELATED"/>
    <property type="match status" value="1"/>
</dbReference>
<dbReference type="PANTHER" id="PTHR16515">
    <property type="entry name" value="PR DOMAIN ZINC FINGER PROTEIN"/>
    <property type="match status" value="1"/>
</dbReference>
<dbReference type="Pfam" id="PF00096">
    <property type="entry name" value="zf-C2H2"/>
    <property type="match status" value="5"/>
</dbReference>
<dbReference type="SMART" id="SM00355">
    <property type="entry name" value="ZnF_C2H2"/>
    <property type="match status" value="5"/>
</dbReference>
<dbReference type="SUPFAM" id="SSF57667">
    <property type="entry name" value="beta-beta-alpha zinc fingers"/>
    <property type="match status" value="3"/>
</dbReference>
<dbReference type="PROSITE" id="PS00028">
    <property type="entry name" value="ZINC_FINGER_C2H2_1"/>
    <property type="match status" value="5"/>
</dbReference>
<dbReference type="PROSITE" id="PS50157">
    <property type="entry name" value="ZINC_FINGER_C2H2_2"/>
    <property type="match status" value="5"/>
</dbReference>
<proteinExistence type="evidence at protein level"/>
<sequence>MGLLYKGSKLLNTILDSLEDQEGGAMYISCDVSNGGPVEPETGYVPNNPLFGLALDSPQQECAASCVGCLSCQGSTALPISSLTSSDFDCGGCFDPTIGVGVGIGGGHIQISTTPPASSGNGSSNNGAGGGSSGNHGYWSTDEMASTFPGLPPLDIDPLPSLFPFSPCGASYNFAAGNPHQAASLSYTVHPHQMLISPNSHNHGQMHSQHQQHQHQQSQVQASHVGNSLLQSSGGNNIGSNGSAGGVANAASCYYETSAGTAAPPPPPAAAMYPSMSVNVSMNMTMHHGYGAGDAGGVPMQCSQMNWTPPSNSTSAAAAAAAVNVLYPPLLSPGHYPASATYSFTADFRAPAPTGLGALPPLTVGEKESPSPPANSSLAGYYPTGVGNQGYTPPHKSPTSYQAAALGLSLSAFEDEEDSNEDLDGDEGSSGGEMKPNLCRLCGKTYARPSTLKTHLRTHSGERPYRCPDCNKSFSQAANLTAHVRTHTGQKPFRCPICDRRFSQSSSVTTHMRTHSGERPYRCSSCKKSFSDSSTLTKHLRIHSGEKPYQCKLCLLRFSQSGNLNRHMRVHGNNNSSNGSNGATGVGGESSTGSGVGGGNSLLT</sequence>
<gene>
    <name type="primary">gl</name>
    <name type="ORF">CG7672</name>
</gene>
<feature type="chain" id="PRO_0000046939" description="Protein glass">
    <location>
        <begin position="1"/>
        <end position="604"/>
    </location>
</feature>
<feature type="zinc finger region" description="C2H2-type 1" evidence="1">
    <location>
        <begin position="437"/>
        <end position="459"/>
    </location>
</feature>
<feature type="zinc finger region" description="C2H2-type 2" evidence="1">
    <location>
        <begin position="465"/>
        <end position="487"/>
    </location>
</feature>
<feature type="zinc finger region" description="C2H2-type 3" evidence="1">
    <location>
        <begin position="493"/>
        <end position="515"/>
    </location>
</feature>
<feature type="zinc finger region" description="C2H2-type 4" evidence="1">
    <location>
        <begin position="521"/>
        <end position="543"/>
    </location>
</feature>
<feature type="zinc finger region" description="C2H2-type 5" evidence="1">
    <location>
        <begin position="549"/>
        <end position="571"/>
    </location>
</feature>
<feature type="region of interest" description="Disordered" evidence="2">
    <location>
        <begin position="111"/>
        <end position="139"/>
    </location>
</feature>
<feature type="region of interest" description="Disordered" evidence="2">
    <location>
        <begin position="199"/>
        <end position="237"/>
    </location>
</feature>
<feature type="region of interest" description="Disordered" evidence="2">
    <location>
        <begin position="359"/>
        <end position="400"/>
    </location>
</feature>
<feature type="region of interest" description="Disordered" evidence="2">
    <location>
        <begin position="414"/>
        <end position="434"/>
    </location>
</feature>
<feature type="region of interest" description="Disordered" evidence="2">
    <location>
        <begin position="566"/>
        <end position="604"/>
    </location>
</feature>
<feature type="compositionally biased region" description="Low complexity" evidence="2">
    <location>
        <begin position="117"/>
        <end position="126"/>
    </location>
</feature>
<feature type="compositionally biased region" description="Low complexity" evidence="2">
    <location>
        <begin position="200"/>
        <end position="237"/>
    </location>
</feature>
<feature type="compositionally biased region" description="Acidic residues" evidence="2">
    <location>
        <begin position="414"/>
        <end position="427"/>
    </location>
</feature>
<feature type="compositionally biased region" description="Low complexity" evidence="2">
    <location>
        <begin position="572"/>
        <end position="581"/>
    </location>
</feature>
<feature type="compositionally biased region" description="Gly residues" evidence="2">
    <location>
        <begin position="582"/>
        <end position="604"/>
    </location>
</feature>
<feature type="splice variant" id="VSP_009352" description="In isoform B." evidence="4">
    <location>
        <begin position="558"/>
        <end position="604"/>
    </location>
</feature>
<feature type="sequence conflict" description="In Ref. 1; CAA33450." evidence="5" ref="1">
    <original>Q</original>
    <variation>E</variation>
    <location>
        <position position="60"/>
    </location>
</feature>
<feature type="sequence conflict" description="In Ref. 1; cDNA." evidence="5" ref="1">
    <original>P</original>
    <variation>S</variation>
    <location>
        <position position="361"/>
    </location>
</feature>
<feature type="sequence conflict" description="In Ref. 1; CAA33450." evidence="5" ref="1">
    <original>L</original>
    <variation>M</variation>
    <location>
        <position position="362"/>
    </location>
</feature>
<feature type="sequence conflict" description="In Ref. 1; cDNA." evidence="5" ref="1">
    <original>S</original>
    <variation>T</variation>
    <location>
        <position position="377"/>
    </location>
</feature>
<organism>
    <name type="scientific">Drosophila melanogaster</name>
    <name type="common">Fruit fly</name>
    <dbReference type="NCBI Taxonomy" id="7227"/>
    <lineage>
        <taxon>Eukaryota</taxon>
        <taxon>Metazoa</taxon>
        <taxon>Ecdysozoa</taxon>
        <taxon>Arthropoda</taxon>
        <taxon>Hexapoda</taxon>
        <taxon>Insecta</taxon>
        <taxon>Pterygota</taxon>
        <taxon>Neoptera</taxon>
        <taxon>Endopterygota</taxon>
        <taxon>Diptera</taxon>
        <taxon>Brachycera</taxon>
        <taxon>Muscomorpha</taxon>
        <taxon>Ephydroidea</taxon>
        <taxon>Drosophilidae</taxon>
        <taxon>Drosophila</taxon>
        <taxon>Sophophora</taxon>
    </lineage>
</organism>
<reference key="1">
    <citation type="journal article" date="1989" name="Nature">
        <title>The glass gene encodes a zinc-finger protein required by Drosophila photoreceptor cells.</title>
        <authorList>
            <person name="Moses K."/>
            <person name="Ellis M.C."/>
            <person name="Rubin G.M."/>
        </authorList>
    </citation>
    <scope>NUCLEOTIDE SEQUENCE [GENOMIC DNA] (ISOFORM A)</scope>
</reference>
<reference key="2">
    <citation type="journal article" date="2000" name="Science">
        <title>The genome sequence of Drosophila melanogaster.</title>
        <authorList>
            <person name="Adams M.D."/>
            <person name="Celniker S.E."/>
            <person name="Holt R.A."/>
            <person name="Evans C.A."/>
            <person name="Gocayne J.D."/>
            <person name="Amanatides P.G."/>
            <person name="Scherer S.E."/>
            <person name="Li P.W."/>
            <person name="Hoskins R.A."/>
            <person name="Galle R.F."/>
            <person name="George R.A."/>
            <person name="Lewis S.E."/>
            <person name="Richards S."/>
            <person name="Ashburner M."/>
            <person name="Henderson S.N."/>
            <person name="Sutton G.G."/>
            <person name="Wortman J.R."/>
            <person name="Yandell M.D."/>
            <person name="Zhang Q."/>
            <person name="Chen L.X."/>
            <person name="Brandon R.C."/>
            <person name="Rogers Y.-H.C."/>
            <person name="Blazej R.G."/>
            <person name="Champe M."/>
            <person name="Pfeiffer B.D."/>
            <person name="Wan K.H."/>
            <person name="Doyle C."/>
            <person name="Baxter E.G."/>
            <person name="Helt G."/>
            <person name="Nelson C.R."/>
            <person name="Miklos G.L.G."/>
            <person name="Abril J.F."/>
            <person name="Agbayani A."/>
            <person name="An H.-J."/>
            <person name="Andrews-Pfannkoch C."/>
            <person name="Baldwin D."/>
            <person name="Ballew R.M."/>
            <person name="Basu A."/>
            <person name="Baxendale J."/>
            <person name="Bayraktaroglu L."/>
            <person name="Beasley E.M."/>
            <person name="Beeson K.Y."/>
            <person name="Benos P.V."/>
            <person name="Berman B.P."/>
            <person name="Bhandari D."/>
            <person name="Bolshakov S."/>
            <person name="Borkova D."/>
            <person name="Botchan M.R."/>
            <person name="Bouck J."/>
            <person name="Brokstein P."/>
            <person name="Brottier P."/>
            <person name="Burtis K.C."/>
            <person name="Busam D.A."/>
            <person name="Butler H."/>
            <person name="Cadieu E."/>
            <person name="Center A."/>
            <person name="Chandra I."/>
            <person name="Cherry J.M."/>
            <person name="Cawley S."/>
            <person name="Dahlke C."/>
            <person name="Davenport L.B."/>
            <person name="Davies P."/>
            <person name="de Pablos B."/>
            <person name="Delcher A."/>
            <person name="Deng Z."/>
            <person name="Mays A.D."/>
            <person name="Dew I."/>
            <person name="Dietz S.M."/>
            <person name="Dodson K."/>
            <person name="Doup L.E."/>
            <person name="Downes M."/>
            <person name="Dugan-Rocha S."/>
            <person name="Dunkov B.C."/>
            <person name="Dunn P."/>
            <person name="Durbin K.J."/>
            <person name="Evangelista C.C."/>
            <person name="Ferraz C."/>
            <person name="Ferriera S."/>
            <person name="Fleischmann W."/>
            <person name="Fosler C."/>
            <person name="Gabrielian A.E."/>
            <person name="Garg N.S."/>
            <person name="Gelbart W.M."/>
            <person name="Glasser K."/>
            <person name="Glodek A."/>
            <person name="Gong F."/>
            <person name="Gorrell J.H."/>
            <person name="Gu Z."/>
            <person name="Guan P."/>
            <person name="Harris M."/>
            <person name="Harris N.L."/>
            <person name="Harvey D.A."/>
            <person name="Heiman T.J."/>
            <person name="Hernandez J.R."/>
            <person name="Houck J."/>
            <person name="Hostin D."/>
            <person name="Houston K.A."/>
            <person name="Howland T.J."/>
            <person name="Wei M.-H."/>
            <person name="Ibegwam C."/>
            <person name="Jalali M."/>
            <person name="Kalush F."/>
            <person name="Karpen G.H."/>
            <person name="Ke Z."/>
            <person name="Kennison J.A."/>
            <person name="Ketchum K.A."/>
            <person name="Kimmel B.E."/>
            <person name="Kodira C.D."/>
            <person name="Kraft C.L."/>
            <person name="Kravitz S."/>
            <person name="Kulp D."/>
            <person name="Lai Z."/>
            <person name="Lasko P."/>
            <person name="Lei Y."/>
            <person name="Levitsky A.A."/>
            <person name="Li J.H."/>
            <person name="Li Z."/>
            <person name="Liang Y."/>
            <person name="Lin X."/>
            <person name="Liu X."/>
            <person name="Mattei B."/>
            <person name="McIntosh T.C."/>
            <person name="McLeod M.P."/>
            <person name="McPherson D."/>
            <person name="Merkulov G."/>
            <person name="Milshina N.V."/>
            <person name="Mobarry C."/>
            <person name="Morris J."/>
            <person name="Moshrefi A."/>
            <person name="Mount S.M."/>
            <person name="Moy M."/>
            <person name="Murphy B."/>
            <person name="Murphy L."/>
            <person name="Muzny D.M."/>
            <person name="Nelson D.L."/>
            <person name="Nelson D.R."/>
            <person name="Nelson K.A."/>
            <person name="Nixon K."/>
            <person name="Nusskern D.R."/>
            <person name="Pacleb J.M."/>
            <person name="Palazzolo M."/>
            <person name="Pittman G.S."/>
            <person name="Pan S."/>
            <person name="Pollard J."/>
            <person name="Puri V."/>
            <person name="Reese M.G."/>
            <person name="Reinert K."/>
            <person name="Remington K."/>
            <person name="Saunders R.D.C."/>
            <person name="Scheeler F."/>
            <person name="Shen H."/>
            <person name="Shue B.C."/>
            <person name="Siden-Kiamos I."/>
            <person name="Simpson M."/>
            <person name="Skupski M.P."/>
            <person name="Smith T.J."/>
            <person name="Spier E."/>
            <person name="Spradling A.C."/>
            <person name="Stapleton M."/>
            <person name="Strong R."/>
            <person name="Sun E."/>
            <person name="Svirskas R."/>
            <person name="Tector C."/>
            <person name="Turner R."/>
            <person name="Venter E."/>
            <person name="Wang A.H."/>
            <person name="Wang X."/>
            <person name="Wang Z.-Y."/>
            <person name="Wassarman D.A."/>
            <person name="Weinstock G.M."/>
            <person name="Weissenbach J."/>
            <person name="Williams S.M."/>
            <person name="Woodage T."/>
            <person name="Worley K.C."/>
            <person name="Wu D."/>
            <person name="Yang S."/>
            <person name="Yao Q.A."/>
            <person name="Ye J."/>
            <person name="Yeh R.-F."/>
            <person name="Zaveri J.S."/>
            <person name="Zhan M."/>
            <person name="Zhang G."/>
            <person name="Zhao Q."/>
            <person name="Zheng L."/>
            <person name="Zheng X.H."/>
            <person name="Zhong F.N."/>
            <person name="Zhong W."/>
            <person name="Zhou X."/>
            <person name="Zhu S.C."/>
            <person name="Zhu X."/>
            <person name="Smith H.O."/>
            <person name="Gibbs R.A."/>
            <person name="Myers E.W."/>
            <person name="Rubin G.M."/>
            <person name="Venter J.C."/>
        </authorList>
    </citation>
    <scope>NUCLEOTIDE SEQUENCE [LARGE SCALE GENOMIC DNA]</scope>
    <source>
        <strain>Berkeley</strain>
    </source>
</reference>
<reference key="3">
    <citation type="journal article" date="2002" name="Genome Biol.">
        <title>Annotation of the Drosophila melanogaster euchromatic genome: a systematic review.</title>
        <authorList>
            <person name="Misra S."/>
            <person name="Crosby M.A."/>
            <person name="Mungall C.J."/>
            <person name="Matthews B.B."/>
            <person name="Campbell K.S."/>
            <person name="Hradecky P."/>
            <person name="Huang Y."/>
            <person name="Kaminker J.S."/>
            <person name="Millburn G.H."/>
            <person name="Prochnik S.E."/>
            <person name="Smith C.D."/>
            <person name="Tupy J.L."/>
            <person name="Whitfield E.J."/>
            <person name="Bayraktaroglu L."/>
            <person name="Berman B.P."/>
            <person name="Bettencourt B.R."/>
            <person name="Celniker S.E."/>
            <person name="de Grey A.D.N.J."/>
            <person name="Drysdale R.A."/>
            <person name="Harris N.L."/>
            <person name="Richter J."/>
            <person name="Russo S."/>
            <person name="Schroeder A.J."/>
            <person name="Shu S.Q."/>
            <person name="Stapleton M."/>
            <person name="Yamada C."/>
            <person name="Ashburner M."/>
            <person name="Gelbart W.M."/>
            <person name="Rubin G.M."/>
            <person name="Lewis S.E."/>
        </authorList>
    </citation>
    <scope>GENOME REANNOTATION</scope>
    <scope>ALTERNATIVE SPLICING</scope>
    <source>
        <strain>Berkeley</strain>
    </source>
</reference>
<reference key="4">
    <citation type="journal article" date="2002" name="Genome Biol.">
        <title>A Drosophila full-length cDNA resource.</title>
        <authorList>
            <person name="Stapleton M."/>
            <person name="Carlson J.W."/>
            <person name="Brokstein P."/>
            <person name="Yu C."/>
            <person name="Champe M."/>
            <person name="George R.A."/>
            <person name="Guarin H."/>
            <person name="Kronmiller B."/>
            <person name="Pacleb J.M."/>
            <person name="Park S."/>
            <person name="Wan K.H."/>
            <person name="Rubin G.M."/>
            <person name="Celniker S.E."/>
        </authorList>
    </citation>
    <scope>NUCLEOTIDE SEQUENCE [LARGE SCALE MRNA] (ISOFORM B)</scope>
    <source>
        <strain>Berkeley</strain>
        <tissue>Head</tissue>
    </source>
</reference>
<reference key="5">
    <citation type="journal article" date="1995" name="Proc. Natl. Acad. Sci. U.S.A.">
        <title>Functional domain analysis of glass, a zinc-finger-containing transcription factor in Drosophila.</title>
        <authorList>
            <person name="O'Neill E.M."/>
            <person name="Ellis M.C."/>
            <person name="Rubin G.M."/>
            <person name="Tjian R."/>
        </authorList>
    </citation>
    <scope>FUNCTION</scope>
    <scope>DNA-BINDING ACTIVITY</scope>
</reference>
<name>GLAS_DROME</name>